<gene>
    <name type="primary">parpbp</name>
    <name type="synonym">pari</name>
    <name type="ORF">TGas059b17.1</name>
</gene>
<sequence>MDCPLENVLDLIKYFRKEWPVVSDSERTTIYGADNMLLTLQLALAEVNKQNGKEFSASLSDVLLTWKCLVKHKLGLAYEDTAVPENYADIRKTYELFLKTSNSLDLIDIYEKISTLGSSEPHNFTSEQLLEFLTEDECFSGDKDFPVVSTPCKNNFDVVKVKATLKRIFLAYLNLLVNSKNDFALAQVLNCPERGLGREAFTDLKHTSRMKNMSLFLVATSFIRTIELGGKGYAPSESDPLRKHLKGLSLFVHFVDRLNEVLGETNDPRTAGELLLSTIKMHLIKGRSSGDPLSEAATDVAQDLDLRIKNLINLLSEDKYSVTPGISPARPKIHAINRGTASGGREMIKTLLKLLDEEAANPPSKNKADLLCADEENTLFGAVSLFTLFRSPEQKNGSSPKPLSHRVQKAMDKNKPKLKQNLIRSQFACTYKDGNLAQIKQWDFPSLSQVPTCIHPAPRIAPVLCFDEEPLENSDLQKQELKLSSGNIDLKTGGQVKNKPCKNVANKRSKRKQVDIQSETTNAQENEPPQKKAVVEITSKKENKPCVTRNCNKSSSKNKLIAGQAKLTSFFRV</sequence>
<keyword id="KW-0963">Cytoplasm</keyword>
<keyword id="KW-0227">DNA damage</keyword>
<keyword id="KW-0234">DNA repair</keyword>
<keyword id="KW-0238">DNA-binding</keyword>
<keyword id="KW-0539">Nucleus</keyword>
<keyword id="KW-1185">Reference proteome</keyword>
<name>PARI_XENTR</name>
<protein>
    <recommendedName>
        <fullName>PCNA-interacting partner</fullName>
        <shortName>PARI</shortName>
    </recommendedName>
    <alternativeName>
        <fullName>PARP-1 binding protein</fullName>
    </alternativeName>
    <alternativeName>
        <fullName>PARP1-binding protein</fullName>
        <shortName>PARPBP</shortName>
    </alternativeName>
</protein>
<comment type="function">
    <text evidence="1">Required to suppress inappropriate homologous recombination, thereby playing a central role DNA repair and in the maintenance of genomic stability.</text>
</comment>
<comment type="subcellular location">
    <subcellularLocation>
        <location evidence="1">Cytoplasm</location>
    </subcellularLocation>
    <subcellularLocation>
        <location evidence="1">Nucleus</location>
    </subcellularLocation>
    <text evidence="1">Localizes to chromatin.</text>
</comment>
<comment type="similarity">
    <text evidence="3">Belongs to the PARI family.</text>
</comment>
<accession>Q28EM3</accession>
<accession>F6V1A0</accession>
<organism>
    <name type="scientific">Xenopus tropicalis</name>
    <name type="common">Western clawed frog</name>
    <name type="synonym">Silurana tropicalis</name>
    <dbReference type="NCBI Taxonomy" id="8364"/>
    <lineage>
        <taxon>Eukaryota</taxon>
        <taxon>Metazoa</taxon>
        <taxon>Chordata</taxon>
        <taxon>Craniata</taxon>
        <taxon>Vertebrata</taxon>
        <taxon>Euteleostomi</taxon>
        <taxon>Amphibia</taxon>
        <taxon>Batrachia</taxon>
        <taxon>Anura</taxon>
        <taxon>Pipoidea</taxon>
        <taxon>Pipidae</taxon>
        <taxon>Xenopodinae</taxon>
        <taxon>Xenopus</taxon>
        <taxon>Silurana</taxon>
    </lineage>
</organism>
<feature type="chain" id="PRO_0000280275" description="PCNA-interacting partner">
    <location>
        <begin position="1"/>
        <end position="573"/>
    </location>
</feature>
<feature type="region of interest" description="Disordered" evidence="2">
    <location>
        <begin position="492"/>
        <end position="532"/>
    </location>
</feature>
<feature type="compositionally biased region" description="Polar residues" evidence="2">
    <location>
        <begin position="515"/>
        <end position="527"/>
    </location>
</feature>
<feature type="sequence conflict" description="In Ref. 1; CAJ83439." evidence="3" ref="1">
    <original>G</original>
    <variation>S</variation>
    <location>
        <position position="434"/>
    </location>
</feature>
<feature type="sequence conflict" description="In Ref. 1; CAJ83439." evidence="3" ref="1">
    <original>A</original>
    <variation>V</variation>
    <location>
        <position position="461"/>
    </location>
</feature>
<feature type="sequence conflict" description="In Ref. 1; CAJ83439." evidence="3" ref="1">
    <original>T</original>
    <variation>P</variation>
    <location>
        <position position="548"/>
    </location>
</feature>
<proteinExistence type="evidence at transcript level"/>
<reference key="1">
    <citation type="submission" date="2006-10" db="EMBL/GenBank/DDBJ databases">
        <authorList>
            <consortium name="Sanger Xenopus tropicalis EST/cDNA project"/>
        </authorList>
    </citation>
    <scope>NUCLEOTIDE SEQUENCE [LARGE SCALE MRNA]</scope>
    <source>
        <tissue>Gastrula</tissue>
    </source>
</reference>
<reference key="2">
    <citation type="journal article" date="2010" name="Science">
        <title>The genome of the Western clawed frog Xenopus tropicalis.</title>
        <authorList>
            <person name="Hellsten U."/>
            <person name="Harland R.M."/>
            <person name="Gilchrist M.J."/>
            <person name="Hendrix D."/>
            <person name="Jurka J."/>
            <person name="Kapitonov V."/>
            <person name="Ovcharenko I."/>
            <person name="Putnam N.H."/>
            <person name="Shu S."/>
            <person name="Taher L."/>
            <person name="Blitz I.L."/>
            <person name="Blumberg B."/>
            <person name="Dichmann D.S."/>
            <person name="Dubchak I."/>
            <person name="Amaya E."/>
            <person name="Detter J.C."/>
            <person name="Fletcher R."/>
            <person name="Gerhard D.S."/>
            <person name="Goodstein D."/>
            <person name="Graves T."/>
            <person name="Grigoriev I.V."/>
            <person name="Grimwood J."/>
            <person name="Kawashima T."/>
            <person name="Lindquist E."/>
            <person name="Lucas S.M."/>
            <person name="Mead P.E."/>
            <person name="Mitros T."/>
            <person name="Ogino H."/>
            <person name="Ohta Y."/>
            <person name="Poliakov A.V."/>
            <person name="Pollet N."/>
            <person name="Robert J."/>
            <person name="Salamov A."/>
            <person name="Sater A.K."/>
            <person name="Schmutz J."/>
            <person name="Terry A."/>
            <person name="Vize P.D."/>
            <person name="Warren W.C."/>
            <person name="Wells D."/>
            <person name="Wills A."/>
            <person name="Wilson R.K."/>
            <person name="Zimmerman L.B."/>
            <person name="Zorn A.M."/>
            <person name="Grainger R."/>
            <person name="Grammer T."/>
            <person name="Khokha M.K."/>
            <person name="Richardson P.M."/>
            <person name="Rokhsar D.S."/>
        </authorList>
    </citation>
    <scope>NUCLEOTIDE SEQUENCE [LARGE SCALE GENOMIC DNA]</scope>
</reference>
<dbReference type="EMBL" id="CR848174">
    <property type="protein sequence ID" value="CAJ83439.1"/>
    <property type="molecule type" value="mRNA"/>
</dbReference>
<dbReference type="EMBL" id="AAMC01063148">
    <property type="status" value="NOT_ANNOTATED_CDS"/>
    <property type="molecule type" value="Genomic_DNA"/>
</dbReference>
<dbReference type="EMBL" id="AAMC01063149">
    <property type="status" value="NOT_ANNOTATED_CDS"/>
    <property type="molecule type" value="Genomic_DNA"/>
</dbReference>
<dbReference type="RefSeq" id="NP_001039039.1">
    <property type="nucleotide sequence ID" value="NM_001045574.1"/>
</dbReference>
<dbReference type="FunCoup" id="Q28EM3">
    <property type="interactions" value="1430"/>
</dbReference>
<dbReference type="STRING" id="8364.ENSXETP00000027097"/>
<dbReference type="PaxDb" id="8364-ENSXETP00000005393"/>
<dbReference type="GeneID" id="733805"/>
<dbReference type="KEGG" id="xtr:733805"/>
<dbReference type="AGR" id="Xenbase:XB-GENE-1004674"/>
<dbReference type="CTD" id="55010"/>
<dbReference type="Xenbase" id="XB-GENE-1004674">
    <property type="gene designation" value="parpbp"/>
</dbReference>
<dbReference type="eggNOG" id="ENOG502QR2U">
    <property type="taxonomic scope" value="Eukaryota"/>
</dbReference>
<dbReference type="HOGENOM" id="CLU_034470_1_0_1"/>
<dbReference type="InParanoid" id="Q28EM3"/>
<dbReference type="OrthoDB" id="6427080at2759"/>
<dbReference type="TreeFam" id="TF332230"/>
<dbReference type="Proteomes" id="UP000008143">
    <property type="component" value="Chromosome 3"/>
</dbReference>
<dbReference type="Bgee" id="ENSXETG00000002534">
    <property type="expression patterns" value="Expressed in egg cell and 8 other cell types or tissues"/>
</dbReference>
<dbReference type="GO" id="GO:0000785">
    <property type="term" value="C:chromatin"/>
    <property type="evidence" value="ECO:0000250"/>
    <property type="project" value="UniProtKB"/>
</dbReference>
<dbReference type="GO" id="GO:0005737">
    <property type="term" value="C:cytoplasm"/>
    <property type="evidence" value="ECO:0007669"/>
    <property type="project" value="UniProtKB-SubCell"/>
</dbReference>
<dbReference type="GO" id="GO:0005634">
    <property type="term" value="C:nucleus"/>
    <property type="evidence" value="ECO:0007669"/>
    <property type="project" value="UniProtKB-SubCell"/>
</dbReference>
<dbReference type="GO" id="GO:0003677">
    <property type="term" value="F:DNA binding"/>
    <property type="evidence" value="ECO:0007669"/>
    <property type="project" value="UniProtKB-KW"/>
</dbReference>
<dbReference type="GO" id="GO:0006281">
    <property type="term" value="P:DNA repair"/>
    <property type="evidence" value="ECO:0007669"/>
    <property type="project" value="UniProtKB-KW"/>
</dbReference>
<dbReference type="GO" id="GO:2000042">
    <property type="term" value="P:negative regulation of double-strand break repair via homologous recombination"/>
    <property type="evidence" value="ECO:0000250"/>
    <property type="project" value="UniProtKB"/>
</dbReference>
<dbReference type="FunFam" id="1.10.486.10:FF:000004">
    <property type="entry name" value="PCNA-interacting partner isoform X3"/>
    <property type="match status" value="1"/>
</dbReference>
<dbReference type="Gene3D" id="1.10.486.10">
    <property type="entry name" value="PCRA, domain 4"/>
    <property type="match status" value="1"/>
</dbReference>
<dbReference type="InterPro" id="IPR027417">
    <property type="entry name" value="P-loop_NTPase"/>
</dbReference>
<dbReference type="InterPro" id="IPR038932">
    <property type="entry name" value="PARPBP"/>
</dbReference>
<dbReference type="PANTHER" id="PTHR32121">
    <property type="entry name" value="PCNA-INTERACTING PARTNER"/>
    <property type="match status" value="1"/>
</dbReference>
<dbReference type="PANTHER" id="PTHR32121:SF0">
    <property type="entry name" value="PCNA-INTERACTING PARTNER"/>
    <property type="match status" value="1"/>
</dbReference>
<dbReference type="SUPFAM" id="SSF52540">
    <property type="entry name" value="P-loop containing nucleoside triphosphate hydrolases"/>
    <property type="match status" value="1"/>
</dbReference>
<evidence type="ECO:0000250" key="1"/>
<evidence type="ECO:0000256" key="2">
    <source>
        <dbReference type="SAM" id="MobiDB-lite"/>
    </source>
</evidence>
<evidence type="ECO:0000305" key="3"/>